<evidence type="ECO:0000250" key="1"/>
<evidence type="ECO:0000255" key="2">
    <source>
        <dbReference type="PROSITE-ProRule" id="PRU00957"/>
    </source>
</evidence>
<comment type="function">
    <text evidence="1">Catalyzes the formation of N(7)-methylguanine at position 46 (m7G46) in tRNA.</text>
</comment>
<comment type="catalytic activity">
    <reaction evidence="2">
        <text>guanosine(46) in tRNA + S-adenosyl-L-methionine = N(7)-methylguanosine(46) in tRNA + S-adenosyl-L-homocysteine</text>
        <dbReference type="Rhea" id="RHEA:42708"/>
        <dbReference type="Rhea" id="RHEA-COMP:10188"/>
        <dbReference type="Rhea" id="RHEA-COMP:10189"/>
        <dbReference type="ChEBI" id="CHEBI:57856"/>
        <dbReference type="ChEBI" id="CHEBI:59789"/>
        <dbReference type="ChEBI" id="CHEBI:74269"/>
        <dbReference type="ChEBI" id="CHEBI:74480"/>
        <dbReference type="EC" id="2.1.1.33"/>
    </reaction>
</comment>
<comment type="pathway">
    <text>tRNA modification; N(7)-methylguanine-tRNA biosynthesis.</text>
</comment>
<comment type="similarity">
    <text evidence="2">Belongs to the class I-like SAM-binding methyltransferase superfamily. TrmB family.</text>
</comment>
<sequence>MRLDLSKDKINLDALFVKQQKIDFDNGDSLLKIAINMPDINFLDIEIYETSINRLINKTHKYQLSNLKIIQVDAHTKDNNFDSFQLFLSGPWYKKKYHKLRLVQTAFLDLLSKTIIHNGKIHIATDWVRYVTTMMNALKNHLHFKNTQNDPIYSLRPGHRPITKFERRSHRPGHDVLDLIFKNEK</sequence>
<keyword id="KW-0489">Methyltransferase</keyword>
<keyword id="KW-0949">S-adenosyl-L-methionine</keyword>
<keyword id="KW-0808">Transferase</keyword>
<keyword id="KW-0819">tRNA processing</keyword>
<proteinExistence type="inferred from homology"/>
<accession>A1AXP6</accession>
<name>TRMB_RUTMC</name>
<reference key="1">
    <citation type="journal article" date="2007" name="Science">
        <title>The Calyptogena magnifica chemoautotrophic symbiont genome.</title>
        <authorList>
            <person name="Newton I.L.G."/>
            <person name="Woyke T."/>
            <person name="Auchtung T.A."/>
            <person name="Dilly G.F."/>
            <person name="Dutton R.J."/>
            <person name="Fisher M.C."/>
            <person name="Fontanez K.M."/>
            <person name="Lau E."/>
            <person name="Stewart F.J."/>
            <person name="Richardson P.M."/>
            <person name="Barry K.W."/>
            <person name="Saunders E."/>
            <person name="Detter J.C."/>
            <person name="Wu D."/>
            <person name="Eisen J.A."/>
            <person name="Cavanaugh C.M."/>
        </authorList>
    </citation>
    <scope>NUCLEOTIDE SEQUENCE [LARGE SCALE GENOMIC DNA]</scope>
</reference>
<organism>
    <name type="scientific">Ruthia magnifica subsp. Calyptogena magnifica</name>
    <dbReference type="NCBI Taxonomy" id="413404"/>
    <lineage>
        <taxon>Bacteria</taxon>
        <taxon>Pseudomonadati</taxon>
        <taxon>Pseudomonadota</taxon>
        <taxon>Gammaproteobacteria</taxon>
        <taxon>Candidatus Pseudothioglobaceae</taxon>
        <taxon>Candidatus Ruthturnera</taxon>
    </lineage>
</organism>
<dbReference type="EC" id="2.1.1.33"/>
<dbReference type="EMBL" id="CP000488">
    <property type="protein sequence ID" value="ABL02703.1"/>
    <property type="molecule type" value="Genomic_DNA"/>
</dbReference>
<dbReference type="RefSeq" id="WP_011738328.1">
    <property type="nucleotide sequence ID" value="NC_008610.1"/>
</dbReference>
<dbReference type="SMR" id="A1AXP6"/>
<dbReference type="STRING" id="413404.Rmag_0997"/>
<dbReference type="KEGG" id="rma:Rmag_0997"/>
<dbReference type="eggNOG" id="COG0220">
    <property type="taxonomic scope" value="Bacteria"/>
</dbReference>
<dbReference type="HOGENOM" id="CLU_050910_0_1_6"/>
<dbReference type="OrthoDB" id="9802090at2"/>
<dbReference type="UniPathway" id="UPA00989"/>
<dbReference type="Proteomes" id="UP000002587">
    <property type="component" value="Chromosome"/>
</dbReference>
<dbReference type="GO" id="GO:0043527">
    <property type="term" value="C:tRNA methyltransferase complex"/>
    <property type="evidence" value="ECO:0007669"/>
    <property type="project" value="TreeGrafter"/>
</dbReference>
<dbReference type="GO" id="GO:0008176">
    <property type="term" value="F:tRNA (guanine(46)-N7)-methyltransferase activity"/>
    <property type="evidence" value="ECO:0007669"/>
    <property type="project" value="UniProtKB-EC"/>
</dbReference>
<dbReference type="Gene3D" id="3.40.50.150">
    <property type="entry name" value="Vaccinia Virus protein VP39"/>
    <property type="match status" value="1"/>
</dbReference>
<dbReference type="InterPro" id="IPR029063">
    <property type="entry name" value="SAM-dependent_MTases_sf"/>
</dbReference>
<dbReference type="InterPro" id="IPR003358">
    <property type="entry name" value="tRNA_(Gua-N-7)_MeTrfase_Trmb"/>
</dbReference>
<dbReference type="PANTHER" id="PTHR23417">
    <property type="entry name" value="3-DEOXY-D-MANNO-OCTULOSONIC-ACID TRANSFERASE/TRNA GUANINE-N 7 - -METHYLTRANSFERASE"/>
    <property type="match status" value="1"/>
</dbReference>
<dbReference type="PANTHER" id="PTHR23417:SF14">
    <property type="entry name" value="PENTACOTRIPEPTIDE-REPEAT REGION OF PRORP DOMAIN-CONTAINING PROTEIN"/>
    <property type="match status" value="1"/>
</dbReference>
<dbReference type="Pfam" id="PF02390">
    <property type="entry name" value="Methyltransf_4"/>
    <property type="match status" value="1"/>
</dbReference>
<dbReference type="SUPFAM" id="SSF53335">
    <property type="entry name" value="S-adenosyl-L-methionine-dependent methyltransferases"/>
    <property type="match status" value="1"/>
</dbReference>
<dbReference type="PROSITE" id="PS51625">
    <property type="entry name" value="SAM_MT_TRMB"/>
    <property type="match status" value="1"/>
</dbReference>
<protein>
    <recommendedName>
        <fullName>tRNA (guanine-N(7)-)-methyltransferase</fullName>
        <ecNumber>2.1.1.33</ecNumber>
    </recommendedName>
    <alternativeName>
        <fullName>tRNA (guanine(46)-N(7))-methyltransferase</fullName>
    </alternativeName>
    <alternativeName>
        <fullName>tRNA(m7G46)-methyltransferase</fullName>
    </alternativeName>
</protein>
<gene>
    <name type="primary">trmB</name>
    <name type="ordered locus">Rmag_0997</name>
</gene>
<feature type="chain" id="PRO_0000288219" description="tRNA (guanine-N(7)-)-methyltransferase">
    <location>
        <begin position="1"/>
        <end position="185"/>
    </location>
</feature>
<feature type="binding site" evidence="2">
    <location>
        <position position="46"/>
    </location>
    <ligand>
        <name>S-adenosyl-L-methionine</name>
        <dbReference type="ChEBI" id="CHEBI:59789"/>
    </ligand>
</feature>
<feature type="binding site" evidence="2">
    <location>
        <position position="73"/>
    </location>
    <ligand>
        <name>S-adenosyl-L-methionine</name>
        <dbReference type="ChEBI" id="CHEBI:59789"/>
    </ligand>
</feature>
<feature type="binding site" evidence="2">
    <location>
        <position position="94"/>
    </location>
    <ligand>
        <name>substrate</name>
    </ligand>
</feature>
<feature type="binding site" evidence="2">
    <location>
        <position position="126"/>
    </location>
    <ligand>
        <name>substrate</name>
    </ligand>
</feature>
<feature type="binding site" evidence="2">
    <location>
        <begin position="163"/>
        <end position="166"/>
    </location>
    <ligand>
        <name>substrate</name>
    </ligand>
</feature>